<accession>P83844</accession>
<accession>P36651</accession>
<reference key="1">
    <citation type="journal article" date="2002" name="Nucleic Acids Res.">
        <title>Genome sequence of Shigella flexneri 2a: insights into pathogenicity through comparison with genomes of Escherichia coli K12 and O157.</title>
        <authorList>
            <person name="Jin Q."/>
            <person name="Yuan Z."/>
            <person name="Xu J."/>
            <person name="Wang Y."/>
            <person name="Shen Y."/>
            <person name="Lu W."/>
            <person name="Wang J."/>
            <person name="Liu H."/>
            <person name="Yang J."/>
            <person name="Yang F."/>
            <person name="Zhang X."/>
            <person name="Zhang J."/>
            <person name="Yang G."/>
            <person name="Wu H."/>
            <person name="Qu D."/>
            <person name="Dong J."/>
            <person name="Sun L."/>
            <person name="Xue Y."/>
            <person name="Zhao A."/>
            <person name="Gao Y."/>
            <person name="Zhu J."/>
            <person name="Kan B."/>
            <person name="Ding K."/>
            <person name="Chen S."/>
            <person name="Cheng H."/>
            <person name="Yao Z."/>
            <person name="He B."/>
            <person name="Chen R."/>
            <person name="Ma D."/>
            <person name="Qiang B."/>
            <person name="Wen Y."/>
            <person name="Hou Y."/>
            <person name="Yu J."/>
        </authorList>
    </citation>
    <scope>NUCLEOTIDE SEQUENCE [LARGE SCALE GENOMIC DNA]</scope>
    <source>
        <strain>301 / Serotype 2a</strain>
    </source>
</reference>
<reference key="2">
    <citation type="journal article" date="2003" name="Infect. Immun.">
        <title>Complete genome sequence and comparative genomics of Shigella flexneri serotype 2a strain 2457T.</title>
        <authorList>
            <person name="Wei J."/>
            <person name="Goldberg M.B."/>
            <person name="Burland V."/>
            <person name="Venkatesan M.M."/>
            <person name="Deng W."/>
            <person name="Fournier G."/>
            <person name="Mayhew G.F."/>
            <person name="Plunkett G. III"/>
            <person name="Rose D.J."/>
            <person name="Darling A."/>
            <person name="Mau B."/>
            <person name="Perna N.T."/>
            <person name="Payne S.M."/>
            <person name="Runyen-Janecky L.J."/>
            <person name="Zhou S."/>
            <person name="Schwartz D.C."/>
            <person name="Blattner F.R."/>
        </authorList>
    </citation>
    <scope>NUCLEOTIDE SEQUENCE [LARGE SCALE GENOMIC DNA]</scope>
    <source>
        <strain>ATCC 700930 / 2457T / Serotype 2a</strain>
    </source>
</reference>
<dbReference type="EC" id="3.6.1.13"/>
<dbReference type="EMBL" id="AE005674">
    <property type="protein sequence ID" value="AAN44552.1"/>
    <property type="molecule type" value="Genomic_DNA"/>
</dbReference>
<dbReference type="EMBL" id="AE014073">
    <property type="protein sequence ID" value="AAP18365.1"/>
    <property type="molecule type" value="Genomic_DNA"/>
</dbReference>
<dbReference type="RefSeq" id="NP_708845.1">
    <property type="nucleotide sequence ID" value="NC_004337.2"/>
</dbReference>
<dbReference type="RefSeq" id="WP_000917117.1">
    <property type="nucleotide sequence ID" value="NZ_WPGW01000100.1"/>
</dbReference>
<dbReference type="SMR" id="P83844"/>
<dbReference type="STRING" id="198214.SF3074"/>
<dbReference type="DrugBank" id="DB02059">
    <property type="generic name" value="Adenosine-5-Diphosphoribose"/>
</dbReference>
<dbReference type="DrugBank" id="DB01975">
    <property type="generic name" value="AMPCPR"/>
</dbReference>
<dbReference type="PaxDb" id="198214-SF3074"/>
<dbReference type="GeneID" id="1026699"/>
<dbReference type="GeneID" id="93778959"/>
<dbReference type="KEGG" id="sfl:SF3074"/>
<dbReference type="KEGG" id="sfx:S3279"/>
<dbReference type="PATRIC" id="fig|198214.7.peg.3649"/>
<dbReference type="HOGENOM" id="CLU_062658_6_1_6"/>
<dbReference type="Proteomes" id="UP000001006">
    <property type="component" value="Chromosome"/>
</dbReference>
<dbReference type="Proteomes" id="UP000002673">
    <property type="component" value="Chromosome"/>
</dbReference>
<dbReference type="GO" id="GO:0005829">
    <property type="term" value="C:cytosol"/>
    <property type="evidence" value="ECO:0007669"/>
    <property type="project" value="TreeGrafter"/>
</dbReference>
<dbReference type="GO" id="GO:0047631">
    <property type="term" value="F:ADP-ribose diphosphatase activity"/>
    <property type="evidence" value="ECO:0007669"/>
    <property type="project" value="UniProtKB-EC"/>
</dbReference>
<dbReference type="GO" id="GO:0019144">
    <property type="term" value="F:ADP-sugar diphosphatase activity"/>
    <property type="evidence" value="ECO:0007669"/>
    <property type="project" value="TreeGrafter"/>
</dbReference>
<dbReference type="GO" id="GO:0046872">
    <property type="term" value="F:metal ion binding"/>
    <property type="evidence" value="ECO:0007669"/>
    <property type="project" value="UniProtKB-KW"/>
</dbReference>
<dbReference type="GO" id="GO:0006753">
    <property type="term" value="P:nucleoside phosphate metabolic process"/>
    <property type="evidence" value="ECO:0007669"/>
    <property type="project" value="TreeGrafter"/>
</dbReference>
<dbReference type="GO" id="GO:0019693">
    <property type="term" value="P:ribose phosphate metabolic process"/>
    <property type="evidence" value="ECO:0007669"/>
    <property type="project" value="TreeGrafter"/>
</dbReference>
<dbReference type="CDD" id="cd24155">
    <property type="entry name" value="NUDIX_ADPRase"/>
    <property type="match status" value="1"/>
</dbReference>
<dbReference type="FunFam" id="3.90.79.10:FF:000011">
    <property type="entry name" value="ADP-ribose pyrophosphatase"/>
    <property type="match status" value="1"/>
</dbReference>
<dbReference type="Gene3D" id="3.90.79.10">
    <property type="entry name" value="Nucleoside Triphosphate Pyrophosphohydrolase"/>
    <property type="match status" value="1"/>
</dbReference>
<dbReference type="InterPro" id="IPR004385">
    <property type="entry name" value="NDP_pyrophosphatase"/>
</dbReference>
<dbReference type="InterPro" id="IPR015797">
    <property type="entry name" value="NUDIX_hydrolase-like_dom_sf"/>
</dbReference>
<dbReference type="InterPro" id="IPR020084">
    <property type="entry name" value="NUDIX_hydrolase_CS"/>
</dbReference>
<dbReference type="InterPro" id="IPR000086">
    <property type="entry name" value="NUDIX_hydrolase_dom"/>
</dbReference>
<dbReference type="NCBIfam" id="TIGR00052">
    <property type="entry name" value="nudix-type nucleoside diphosphatase, YffH/AdpP family"/>
    <property type="match status" value="1"/>
</dbReference>
<dbReference type="NCBIfam" id="NF008003">
    <property type="entry name" value="PRK10729.1"/>
    <property type="match status" value="1"/>
</dbReference>
<dbReference type="PANTHER" id="PTHR11839:SF5">
    <property type="entry name" value="ADP-RIBOSE PYROPHOSPHATASE"/>
    <property type="match status" value="1"/>
</dbReference>
<dbReference type="PANTHER" id="PTHR11839">
    <property type="entry name" value="UDP/ADP-SUGAR PYROPHOSPHATASE"/>
    <property type="match status" value="1"/>
</dbReference>
<dbReference type="Pfam" id="PF00293">
    <property type="entry name" value="NUDIX"/>
    <property type="match status" value="1"/>
</dbReference>
<dbReference type="SUPFAM" id="SSF55811">
    <property type="entry name" value="Nudix"/>
    <property type="match status" value="1"/>
</dbReference>
<dbReference type="PROSITE" id="PS51462">
    <property type="entry name" value="NUDIX"/>
    <property type="match status" value="1"/>
</dbReference>
<dbReference type="PROSITE" id="PS00893">
    <property type="entry name" value="NUDIX_BOX"/>
    <property type="match status" value="1"/>
</dbReference>
<name>ADPP_SHIFL</name>
<comment type="function">
    <text evidence="1">Acts on ADP-mannose and ADP-glucose as well as ADP-ribose. Prevents glycogen biosynthesis. The reaction catalyzed by this enzyme is a limiting step of the gluconeogenic process (By similarity).</text>
</comment>
<comment type="catalytic activity">
    <reaction>
        <text>ADP-D-ribose + H2O = D-ribose 5-phosphate + AMP + 2 H(+)</text>
        <dbReference type="Rhea" id="RHEA:10412"/>
        <dbReference type="ChEBI" id="CHEBI:15377"/>
        <dbReference type="ChEBI" id="CHEBI:15378"/>
        <dbReference type="ChEBI" id="CHEBI:57967"/>
        <dbReference type="ChEBI" id="CHEBI:78346"/>
        <dbReference type="ChEBI" id="CHEBI:456215"/>
        <dbReference type="EC" id="3.6.1.13"/>
    </reaction>
</comment>
<comment type="cofactor">
    <cofactor evidence="1">
        <name>Mg(2+)</name>
        <dbReference type="ChEBI" id="CHEBI:18420"/>
    </cofactor>
    <text evidence="1">Binds 3 Mg(2+) ions per subunit.</text>
</comment>
<comment type="activity regulation">
    <text evidence="1">Inhibited by phosphorylated compounds such as AMP, ADP, ATP, 3-phosphoglyceric acid and PPi. Not inhibited by orthophosphate. Activity is high in cells grown in low glucose concentrations and decreases dramatically as glucose concentration increases (By similarity).</text>
</comment>
<comment type="subunit">
    <text evidence="1">Homodimer.</text>
</comment>
<comment type="similarity">
    <text evidence="3">Belongs to the Nudix hydrolase family. NudF subfamily.</text>
</comment>
<evidence type="ECO:0000250" key="1"/>
<evidence type="ECO:0000255" key="2">
    <source>
        <dbReference type="PROSITE-ProRule" id="PRU00794"/>
    </source>
</evidence>
<evidence type="ECO:0000305" key="3"/>
<sequence length="209" mass="23667">MLKPDNLPVTFGKNDVEIIARETLYRGFFSLDLYRFRHRLFNGQMSHEVRREIFERGHAAVLLPFDPVRDEVVLIEQIRIAAYDTSETPWLLEMVAGMIEEGESVEDVARREAIEEAGLIVKRTKPVLSFLASPGGTSERSSIMVGEVDATTASGIHGLADENEDIRVHVVSREQAYQWVEEGKIDNAASVIALQWLQLHHQALKNEWA</sequence>
<keyword id="KW-0378">Hydrolase</keyword>
<keyword id="KW-0460">Magnesium</keyword>
<keyword id="KW-0479">Metal-binding</keyword>
<keyword id="KW-1185">Reference proteome</keyword>
<organism>
    <name type="scientific">Shigella flexneri</name>
    <dbReference type="NCBI Taxonomy" id="623"/>
    <lineage>
        <taxon>Bacteria</taxon>
        <taxon>Pseudomonadati</taxon>
        <taxon>Pseudomonadota</taxon>
        <taxon>Gammaproteobacteria</taxon>
        <taxon>Enterobacterales</taxon>
        <taxon>Enterobacteriaceae</taxon>
        <taxon>Shigella</taxon>
    </lineage>
</organism>
<feature type="chain" id="PRO_0000057046" description="ADP-ribose pyrophosphatase">
    <location>
        <begin position="1"/>
        <end position="209"/>
    </location>
</feature>
<feature type="domain" description="Nudix hydrolase" evidence="2">
    <location>
        <begin position="55"/>
        <end position="193"/>
    </location>
</feature>
<feature type="short sequence motif" description="Nudix box">
    <location>
        <begin position="97"/>
        <end position="118"/>
    </location>
</feature>
<feature type="active site" description="Proton acceptor" evidence="1">
    <location>
        <position position="162"/>
    </location>
</feature>
<feature type="binding site" description="in other chain" evidence="1">
    <location>
        <begin position="28"/>
        <end position="29"/>
    </location>
    <ligand>
        <name>substrate</name>
        <note>ligand shared between dimeric partners</note>
    </ligand>
</feature>
<feature type="binding site" evidence="1">
    <location>
        <begin position="51"/>
        <end position="52"/>
    </location>
    <ligand>
        <name>substrate</name>
        <note>ligand shared between dimeric partners</note>
    </ligand>
</feature>
<feature type="binding site" description="in other chain" evidence="1">
    <location>
        <position position="56"/>
    </location>
    <ligand>
        <name>substrate</name>
        <note>ligand shared between dimeric partners</note>
    </ligand>
</feature>
<feature type="binding site" description="in other chain" evidence="1">
    <location>
        <position position="79"/>
    </location>
    <ligand>
        <name>substrate</name>
        <note>ligand shared between dimeric partners</note>
    </ligand>
</feature>
<feature type="binding site" evidence="1">
    <location>
        <position position="96"/>
    </location>
    <ligand>
        <name>Mg(2+)</name>
        <dbReference type="ChEBI" id="CHEBI:18420"/>
        <label>1</label>
    </ligand>
</feature>
<feature type="binding site" description="in other chain" evidence="1">
    <location>
        <position position="98"/>
    </location>
    <ligand>
        <name>substrate</name>
        <note>ligand shared between dimeric partners</note>
    </ligand>
</feature>
<feature type="binding site" evidence="1">
    <location>
        <position position="112"/>
    </location>
    <ligand>
        <name>Mg(2+)</name>
        <dbReference type="ChEBI" id="CHEBI:18420"/>
        <label>2</label>
    </ligand>
</feature>
<feature type="binding site" evidence="1">
    <location>
        <position position="112"/>
    </location>
    <ligand>
        <name>Mg(2+)</name>
        <dbReference type="ChEBI" id="CHEBI:18420"/>
        <label>3</label>
    </ligand>
</feature>
<feature type="binding site" evidence="1">
    <location>
        <position position="116"/>
    </location>
    <ligand>
        <name>Mg(2+)</name>
        <dbReference type="ChEBI" id="CHEBI:18420"/>
        <label>1</label>
    </ligand>
</feature>
<feature type="binding site" evidence="1">
    <location>
        <position position="116"/>
    </location>
    <ligand>
        <name>Mg(2+)</name>
        <dbReference type="ChEBI" id="CHEBI:18420"/>
        <label>3</label>
    </ligand>
</feature>
<feature type="binding site" evidence="1">
    <location>
        <begin position="133"/>
        <end position="135"/>
    </location>
    <ligand>
        <name>substrate</name>
        <note>ligand shared between dimeric partners</note>
    </ligand>
</feature>
<feature type="binding site" description="in other chain" evidence="1">
    <location>
        <position position="139"/>
    </location>
    <ligand>
        <name>substrate</name>
        <note>ligand shared between dimeric partners</note>
    </ligand>
</feature>
<feature type="binding site" evidence="1">
    <location>
        <position position="164"/>
    </location>
    <ligand>
        <name>Mg(2+)</name>
        <dbReference type="ChEBI" id="CHEBI:18420"/>
        <label>3</label>
    </ligand>
</feature>
<protein>
    <recommendedName>
        <fullName>ADP-ribose pyrophosphatase</fullName>
        <ecNumber>3.6.1.13</ecNumber>
    </recommendedName>
    <alternativeName>
        <fullName>ADP-ribose diphosphatase</fullName>
    </alternativeName>
    <alternativeName>
        <fullName>ADP-ribose phosphohydrolase</fullName>
        <shortName>ASPPase</shortName>
    </alternativeName>
    <alternativeName>
        <fullName>Adenosine diphosphoribose pyrophosphatase</fullName>
        <shortName>ADPR-PPase</shortName>
    </alternativeName>
</protein>
<proteinExistence type="inferred from homology"/>
<gene>
    <name type="primary">nudF</name>
    <name type="synonym">aspP</name>
    <name type="ordered locus">SF3074</name>
    <name type="ordered locus">S3279</name>
</gene>